<keyword id="KW-0067">ATP-binding</keyword>
<keyword id="KW-0143">Chaperone</keyword>
<keyword id="KW-0963">Cytoplasm</keyword>
<keyword id="KW-0413">Isomerase</keyword>
<keyword id="KW-0547">Nucleotide-binding</keyword>
<keyword id="KW-1185">Reference proteome</keyword>
<keyword id="KW-0346">Stress response</keyword>
<dbReference type="EC" id="5.6.1.7" evidence="1"/>
<dbReference type="EMBL" id="M94190">
    <property type="protein sequence ID" value="AAA26283.1"/>
    <property type="molecule type" value="Genomic_DNA"/>
</dbReference>
<dbReference type="EMBL" id="AL591688">
    <property type="protein sequence ID" value="CAC45775.1"/>
    <property type="molecule type" value="Genomic_DNA"/>
</dbReference>
<dbReference type="PIR" id="JN0511">
    <property type="entry name" value="JN0511"/>
</dbReference>
<dbReference type="RefSeq" id="NP_385302.1">
    <property type="nucleotide sequence ID" value="NC_003047.1"/>
</dbReference>
<dbReference type="RefSeq" id="WP_003529335.1">
    <property type="nucleotide sequence ID" value="NC_003047.1"/>
</dbReference>
<dbReference type="SMR" id="P35470"/>
<dbReference type="EnsemblBacteria" id="CAC45775">
    <property type="protein sequence ID" value="CAC45775"/>
    <property type="gene ID" value="SMc01758"/>
</dbReference>
<dbReference type="KEGG" id="sme:SMc01758"/>
<dbReference type="PATRIC" id="fig|266834.11.peg.2607"/>
<dbReference type="eggNOG" id="COG0459">
    <property type="taxonomic scope" value="Bacteria"/>
</dbReference>
<dbReference type="HOGENOM" id="CLU_016503_3_0_5"/>
<dbReference type="OrthoDB" id="9766614at2"/>
<dbReference type="Proteomes" id="UP000001976">
    <property type="component" value="Chromosome"/>
</dbReference>
<dbReference type="GO" id="GO:0005737">
    <property type="term" value="C:cytoplasm"/>
    <property type="evidence" value="ECO:0007669"/>
    <property type="project" value="UniProtKB-SubCell"/>
</dbReference>
<dbReference type="GO" id="GO:0005524">
    <property type="term" value="F:ATP binding"/>
    <property type="evidence" value="ECO:0007669"/>
    <property type="project" value="UniProtKB-UniRule"/>
</dbReference>
<dbReference type="GO" id="GO:0140662">
    <property type="term" value="F:ATP-dependent protein folding chaperone"/>
    <property type="evidence" value="ECO:0007669"/>
    <property type="project" value="InterPro"/>
</dbReference>
<dbReference type="GO" id="GO:0016853">
    <property type="term" value="F:isomerase activity"/>
    <property type="evidence" value="ECO:0007669"/>
    <property type="project" value="UniProtKB-KW"/>
</dbReference>
<dbReference type="GO" id="GO:0051082">
    <property type="term" value="F:unfolded protein binding"/>
    <property type="evidence" value="ECO:0007669"/>
    <property type="project" value="UniProtKB-UniRule"/>
</dbReference>
<dbReference type="GO" id="GO:0042026">
    <property type="term" value="P:protein refolding"/>
    <property type="evidence" value="ECO:0007669"/>
    <property type="project" value="UniProtKB-UniRule"/>
</dbReference>
<dbReference type="CDD" id="cd03344">
    <property type="entry name" value="GroEL"/>
    <property type="match status" value="1"/>
</dbReference>
<dbReference type="FunFam" id="1.10.560.10:FF:000001">
    <property type="entry name" value="60 kDa chaperonin"/>
    <property type="match status" value="1"/>
</dbReference>
<dbReference type="FunFam" id="3.50.7.10:FF:000001">
    <property type="entry name" value="60 kDa chaperonin"/>
    <property type="match status" value="1"/>
</dbReference>
<dbReference type="Gene3D" id="3.50.7.10">
    <property type="entry name" value="GroEL"/>
    <property type="match status" value="1"/>
</dbReference>
<dbReference type="Gene3D" id="1.10.560.10">
    <property type="entry name" value="GroEL-like equatorial domain"/>
    <property type="match status" value="1"/>
</dbReference>
<dbReference type="Gene3D" id="3.30.260.10">
    <property type="entry name" value="TCP-1-like chaperonin intermediate domain"/>
    <property type="match status" value="1"/>
</dbReference>
<dbReference type="HAMAP" id="MF_00600">
    <property type="entry name" value="CH60"/>
    <property type="match status" value="1"/>
</dbReference>
<dbReference type="InterPro" id="IPR018370">
    <property type="entry name" value="Chaperonin_Cpn60_CS"/>
</dbReference>
<dbReference type="InterPro" id="IPR001844">
    <property type="entry name" value="Cpn60/GroEL"/>
</dbReference>
<dbReference type="InterPro" id="IPR002423">
    <property type="entry name" value="Cpn60/GroEL/TCP-1"/>
</dbReference>
<dbReference type="InterPro" id="IPR027409">
    <property type="entry name" value="GroEL-like_apical_dom_sf"/>
</dbReference>
<dbReference type="InterPro" id="IPR027413">
    <property type="entry name" value="GROEL-like_equatorial_sf"/>
</dbReference>
<dbReference type="InterPro" id="IPR027410">
    <property type="entry name" value="TCP-1-like_intermed_sf"/>
</dbReference>
<dbReference type="NCBIfam" id="TIGR02348">
    <property type="entry name" value="GroEL"/>
    <property type="match status" value="1"/>
</dbReference>
<dbReference type="NCBIfam" id="NF000592">
    <property type="entry name" value="PRK00013.1"/>
    <property type="match status" value="1"/>
</dbReference>
<dbReference type="NCBIfam" id="NF009487">
    <property type="entry name" value="PRK12849.1"/>
    <property type="match status" value="1"/>
</dbReference>
<dbReference type="NCBIfam" id="NF009488">
    <property type="entry name" value="PRK12850.1"/>
    <property type="match status" value="1"/>
</dbReference>
<dbReference type="NCBIfam" id="NF009489">
    <property type="entry name" value="PRK12851.1"/>
    <property type="match status" value="1"/>
</dbReference>
<dbReference type="PANTHER" id="PTHR45633">
    <property type="entry name" value="60 KDA HEAT SHOCK PROTEIN, MITOCHONDRIAL"/>
    <property type="match status" value="1"/>
</dbReference>
<dbReference type="Pfam" id="PF00118">
    <property type="entry name" value="Cpn60_TCP1"/>
    <property type="match status" value="1"/>
</dbReference>
<dbReference type="PRINTS" id="PR00298">
    <property type="entry name" value="CHAPERONIN60"/>
</dbReference>
<dbReference type="SUPFAM" id="SSF52029">
    <property type="entry name" value="GroEL apical domain-like"/>
    <property type="match status" value="1"/>
</dbReference>
<dbReference type="SUPFAM" id="SSF48592">
    <property type="entry name" value="GroEL equatorial domain-like"/>
    <property type="match status" value="1"/>
</dbReference>
<dbReference type="SUPFAM" id="SSF54849">
    <property type="entry name" value="GroEL-intermediate domain like"/>
    <property type="match status" value="1"/>
</dbReference>
<dbReference type="PROSITE" id="PS00296">
    <property type="entry name" value="CHAPERONINS_CPN60"/>
    <property type="match status" value="1"/>
</dbReference>
<name>CH602_RHIME</name>
<gene>
    <name evidence="1" type="primary">groEL2</name>
    <name evidence="1" type="synonym">groL2</name>
    <name type="ordered locus">R01196</name>
    <name type="ORF">SMc01758</name>
</gene>
<organism>
    <name type="scientific">Rhizobium meliloti (strain 1021)</name>
    <name type="common">Ensifer meliloti</name>
    <name type="synonym">Sinorhizobium meliloti</name>
    <dbReference type="NCBI Taxonomy" id="266834"/>
    <lineage>
        <taxon>Bacteria</taxon>
        <taxon>Pseudomonadati</taxon>
        <taxon>Pseudomonadota</taxon>
        <taxon>Alphaproteobacteria</taxon>
        <taxon>Hyphomicrobiales</taxon>
        <taxon>Rhizobiaceae</taxon>
        <taxon>Sinorhizobium/Ensifer group</taxon>
        <taxon>Sinorhizobium</taxon>
    </lineage>
</organism>
<feature type="chain" id="PRO_0000063501" description="Chaperonin GroEL 2">
    <location>
        <begin position="1"/>
        <end position="542"/>
    </location>
</feature>
<feature type="binding site" evidence="1">
    <location>
        <begin position="30"/>
        <end position="33"/>
    </location>
    <ligand>
        <name>ATP</name>
        <dbReference type="ChEBI" id="CHEBI:30616"/>
    </ligand>
</feature>
<feature type="binding site" evidence="1">
    <location>
        <position position="51"/>
    </location>
    <ligand>
        <name>ATP</name>
        <dbReference type="ChEBI" id="CHEBI:30616"/>
    </ligand>
</feature>
<feature type="binding site" evidence="1">
    <location>
        <begin position="87"/>
        <end position="91"/>
    </location>
    <ligand>
        <name>ATP</name>
        <dbReference type="ChEBI" id="CHEBI:30616"/>
    </ligand>
</feature>
<feature type="binding site" evidence="1">
    <location>
        <position position="415"/>
    </location>
    <ligand>
        <name>ATP</name>
        <dbReference type="ChEBI" id="CHEBI:30616"/>
    </ligand>
</feature>
<feature type="binding site" evidence="1">
    <location>
        <position position="496"/>
    </location>
    <ligand>
        <name>ATP</name>
        <dbReference type="ChEBI" id="CHEBI:30616"/>
    </ligand>
</feature>
<feature type="sequence conflict" description="In Ref. 1; AAA26283." evidence="2" ref="1">
    <original>GG</original>
    <variation>AS</variation>
    <location>
        <begin position="269"/>
        <end position="270"/>
    </location>
</feature>
<feature type="sequence conflict" description="In Ref. 1; AAA26283." evidence="2" ref="1">
    <original>G</original>
    <variation>R</variation>
    <location>
        <position position="306"/>
    </location>
</feature>
<feature type="sequence conflict" description="In Ref. 1; AAA26283." evidence="2" ref="1">
    <original>R</original>
    <variation>P</variation>
    <location>
        <position position="421"/>
    </location>
</feature>
<feature type="sequence conflict" description="In Ref. 1; AAA26283." evidence="2" ref="1">
    <original>AAL</original>
    <variation>TAV</variation>
    <location>
        <begin position="503"/>
        <end position="505"/>
    </location>
</feature>
<feature type="sequence conflict" description="In Ref. 1; AAA26283." evidence="2" ref="1">
    <location>
        <position position="539"/>
    </location>
</feature>
<accession>P35470</accession>
<comment type="function">
    <text evidence="1">Together with its co-chaperonin GroES, plays an essential role in assisting protein folding. The GroEL-GroES system forms a nano-cage that allows encapsulation of the non-native substrate proteins and provides a physical environment optimized to promote and accelerate protein folding.</text>
</comment>
<comment type="catalytic activity">
    <reaction evidence="1">
        <text>ATP + H2O + a folded polypeptide = ADP + phosphate + an unfolded polypeptide.</text>
        <dbReference type="EC" id="5.6.1.7"/>
    </reaction>
</comment>
<comment type="subunit">
    <text evidence="1">Forms a cylinder of 14 subunits composed of two heptameric rings stacked back-to-back. Interacts with the co-chaperonin GroES.</text>
</comment>
<comment type="subcellular location">
    <subcellularLocation>
        <location evidence="1">Cytoplasm</location>
    </subcellularLocation>
</comment>
<comment type="induction">
    <text>By heat shock.</text>
</comment>
<comment type="similarity">
    <text evidence="1">Belongs to the chaperonin (HSP60) family.</text>
</comment>
<sequence length="542" mass="57984">MAAKEVKFTSDARDRMLRGVDIMANAVRVTLGPKGRNVVIDKSFGAPRITKDGVSVAKEIELEDKFENMGAQMLREVASRTSDIAGDGTTTATVLAQAIVREGAKAVASGMNPMDLKRGIDLAVEAIVKELRNNARKVSKNAEIAQVATISANGDAEIGRYLAEAMEKVGNEGVITVEEAKTAEIELEVVEGMEFDRGYLSPYFITNQEKMRVELEDAYILLHEKKLSNLQAMIPILESVIQSGKPLLIIAEDVEGEALATLVVNKLRGGLKIAAVKAPGFGDRRKSMLEDIAILTGGTVISEELGIKLENTTMDTLGRAKRIMVDKETTTIVDGAGSKEDIGGRVAQIKAQIEDTTSDYDREKLQERLAKLAGGVAVIRVGGSTEVEVKEKKDRVDDALHATRAAVEEGILPGGGVALLRVVSALNGLATANDDQRVGIEIVRRAIEAPVRQIAENAGAEGSIIVGKLREKQDFAFGWNAQTGEFGDLFQMGVIDPAKVVRAALQDAASIAGLLVTTEAMIAEKPKKDGQPQMPPGGGMDF</sequence>
<proteinExistence type="evidence at transcript level"/>
<protein>
    <recommendedName>
        <fullName evidence="1">Chaperonin GroEL 2</fullName>
        <ecNumber evidence="1">5.6.1.7</ecNumber>
    </recommendedName>
    <alternativeName>
        <fullName evidence="1">60 kDa chaperonin 2</fullName>
    </alternativeName>
    <alternativeName>
        <fullName evidence="1">Chaperonin-60 2</fullName>
        <shortName evidence="1">Cpn60 2</shortName>
    </alternativeName>
</protein>
<evidence type="ECO:0000255" key="1">
    <source>
        <dbReference type="HAMAP-Rule" id="MF_00600"/>
    </source>
</evidence>
<evidence type="ECO:0000305" key="2"/>
<reference key="1">
    <citation type="journal article" date="1993" name="Gene">
        <title>Cloning and characterization of multiple groEL chaperonin-encoding genes in Rhizobium meliloti.</title>
        <authorList>
            <person name="Rusanganwa E."/>
            <person name="Gupta R.S."/>
        </authorList>
    </citation>
    <scope>NUCLEOTIDE SEQUENCE [GENOMIC DNA]</scope>
    <source>
        <strain>1021</strain>
    </source>
</reference>
<reference key="2">
    <citation type="journal article" date="2001" name="Proc. Natl. Acad. Sci. U.S.A.">
        <title>Analysis of the chromosome sequence of the legume symbiont Sinorhizobium meliloti strain 1021.</title>
        <authorList>
            <person name="Capela D."/>
            <person name="Barloy-Hubler F."/>
            <person name="Gouzy J."/>
            <person name="Bothe G."/>
            <person name="Ampe F."/>
            <person name="Batut J."/>
            <person name="Boistard P."/>
            <person name="Becker A."/>
            <person name="Boutry M."/>
            <person name="Cadieu E."/>
            <person name="Dreano S."/>
            <person name="Gloux S."/>
            <person name="Godrie T."/>
            <person name="Goffeau A."/>
            <person name="Kahn D."/>
            <person name="Kiss E."/>
            <person name="Lelaure V."/>
            <person name="Masuy D."/>
            <person name="Pohl T."/>
            <person name="Portetelle D."/>
            <person name="Puehler A."/>
            <person name="Purnelle B."/>
            <person name="Ramsperger U."/>
            <person name="Renard C."/>
            <person name="Thebault P."/>
            <person name="Vandenbol M."/>
            <person name="Weidner S."/>
            <person name="Galibert F."/>
        </authorList>
    </citation>
    <scope>NUCLEOTIDE SEQUENCE [LARGE SCALE GENOMIC DNA]</scope>
    <source>
        <strain>1021</strain>
    </source>
</reference>
<reference key="3">
    <citation type="journal article" date="2001" name="Science">
        <title>The composite genome of the legume symbiont Sinorhizobium meliloti.</title>
        <authorList>
            <person name="Galibert F."/>
            <person name="Finan T.M."/>
            <person name="Long S.R."/>
            <person name="Puehler A."/>
            <person name="Abola P."/>
            <person name="Ampe F."/>
            <person name="Barloy-Hubler F."/>
            <person name="Barnett M.J."/>
            <person name="Becker A."/>
            <person name="Boistard P."/>
            <person name="Bothe G."/>
            <person name="Boutry M."/>
            <person name="Bowser L."/>
            <person name="Buhrmester J."/>
            <person name="Cadieu E."/>
            <person name="Capela D."/>
            <person name="Chain P."/>
            <person name="Cowie A."/>
            <person name="Davis R.W."/>
            <person name="Dreano S."/>
            <person name="Federspiel N.A."/>
            <person name="Fisher R.F."/>
            <person name="Gloux S."/>
            <person name="Godrie T."/>
            <person name="Goffeau A."/>
            <person name="Golding B."/>
            <person name="Gouzy J."/>
            <person name="Gurjal M."/>
            <person name="Hernandez-Lucas I."/>
            <person name="Hong A."/>
            <person name="Huizar L."/>
            <person name="Hyman R.W."/>
            <person name="Jones T."/>
            <person name="Kahn D."/>
            <person name="Kahn M.L."/>
            <person name="Kalman S."/>
            <person name="Keating D.H."/>
            <person name="Kiss E."/>
            <person name="Komp C."/>
            <person name="Lelaure V."/>
            <person name="Masuy D."/>
            <person name="Palm C."/>
            <person name="Peck M.C."/>
            <person name="Pohl T.M."/>
            <person name="Portetelle D."/>
            <person name="Purnelle B."/>
            <person name="Ramsperger U."/>
            <person name="Surzycki R."/>
            <person name="Thebault P."/>
            <person name="Vandenbol M."/>
            <person name="Vorhoelter F.J."/>
            <person name="Weidner S."/>
            <person name="Wells D.H."/>
            <person name="Wong K."/>
            <person name="Yeh K.-C."/>
            <person name="Batut J."/>
        </authorList>
    </citation>
    <scope>NUCLEOTIDE SEQUENCE [LARGE SCALE GENOMIC DNA]</scope>
    <source>
        <strain>1021</strain>
    </source>
</reference>